<gene>
    <name evidence="1" type="primary">mscL</name>
    <name type="ordered locus">Bmul_1318</name>
    <name type="ordered locus">BMULJ_01928</name>
</gene>
<comment type="function">
    <text evidence="1">Channel that opens in response to stretch forces in the membrane lipid bilayer. May participate in the regulation of osmotic pressure changes within the cell.</text>
</comment>
<comment type="subunit">
    <text evidence="1">Homopentamer.</text>
</comment>
<comment type="subcellular location">
    <subcellularLocation>
        <location evidence="1">Cell inner membrane</location>
        <topology evidence="1">Multi-pass membrane protein</topology>
    </subcellularLocation>
</comment>
<comment type="similarity">
    <text evidence="1">Belongs to the MscL family.</text>
</comment>
<protein>
    <recommendedName>
        <fullName evidence="1">Large-conductance mechanosensitive channel</fullName>
    </recommendedName>
</protein>
<keyword id="KW-0997">Cell inner membrane</keyword>
<keyword id="KW-1003">Cell membrane</keyword>
<keyword id="KW-0407">Ion channel</keyword>
<keyword id="KW-0406">Ion transport</keyword>
<keyword id="KW-0472">Membrane</keyword>
<keyword id="KW-1185">Reference proteome</keyword>
<keyword id="KW-0812">Transmembrane</keyword>
<keyword id="KW-1133">Transmembrane helix</keyword>
<keyword id="KW-0813">Transport</keyword>
<sequence length="143" mass="15448">MSIIKEFKEFAVKGNVMDLAVGVIIGGAFSKIVDSVVKDLIMPVIGVLTGGLDFSNKFVLLGTVPASFKGNPDSFKDLQAAGVAVFGYGSFITVLINFIILAFIIFLMVKFINKLRKPAEAAPAATPEDIVLLREIRDSLKQR</sequence>
<feature type="chain" id="PRO_1000094884" description="Large-conductance mechanosensitive channel">
    <location>
        <begin position="1"/>
        <end position="143"/>
    </location>
</feature>
<feature type="transmembrane region" description="Helical" evidence="1">
    <location>
        <begin position="10"/>
        <end position="30"/>
    </location>
</feature>
<feature type="transmembrane region" description="Helical" evidence="1">
    <location>
        <begin position="89"/>
        <end position="109"/>
    </location>
</feature>
<reference key="1">
    <citation type="submission" date="2007-10" db="EMBL/GenBank/DDBJ databases">
        <title>Complete sequence of chromosome 1 of Burkholderia multivorans ATCC 17616.</title>
        <authorList>
            <person name="Copeland A."/>
            <person name="Lucas S."/>
            <person name="Lapidus A."/>
            <person name="Barry K."/>
            <person name="Glavina del Rio T."/>
            <person name="Dalin E."/>
            <person name="Tice H."/>
            <person name="Pitluck S."/>
            <person name="Chain P."/>
            <person name="Malfatti S."/>
            <person name="Shin M."/>
            <person name="Vergez L."/>
            <person name="Schmutz J."/>
            <person name="Larimer F."/>
            <person name="Land M."/>
            <person name="Hauser L."/>
            <person name="Kyrpides N."/>
            <person name="Kim E."/>
            <person name="Tiedje J."/>
            <person name="Richardson P."/>
        </authorList>
    </citation>
    <scope>NUCLEOTIDE SEQUENCE [LARGE SCALE GENOMIC DNA]</scope>
    <source>
        <strain>ATCC 17616 / 249</strain>
    </source>
</reference>
<reference key="2">
    <citation type="submission" date="2007-04" db="EMBL/GenBank/DDBJ databases">
        <title>Complete genome sequence of Burkholderia multivorans ATCC 17616.</title>
        <authorList>
            <person name="Ohtsubo Y."/>
            <person name="Yamashita A."/>
            <person name="Kurokawa K."/>
            <person name="Takami H."/>
            <person name="Yuhara S."/>
            <person name="Nishiyama E."/>
            <person name="Endo R."/>
            <person name="Miyazaki R."/>
            <person name="Ono A."/>
            <person name="Yano K."/>
            <person name="Ito M."/>
            <person name="Sota M."/>
            <person name="Yuji N."/>
            <person name="Hattori M."/>
            <person name="Tsuda M."/>
        </authorList>
    </citation>
    <scope>NUCLEOTIDE SEQUENCE [LARGE SCALE GENOMIC DNA]</scope>
    <source>
        <strain>ATCC 17616 / 249</strain>
    </source>
</reference>
<proteinExistence type="inferred from homology"/>
<evidence type="ECO:0000255" key="1">
    <source>
        <dbReference type="HAMAP-Rule" id="MF_00115"/>
    </source>
</evidence>
<name>MSCL_BURM1</name>
<organism>
    <name type="scientific">Burkholderia multivorans (strain ATCC 17616 / 249)</name>
    <dbReference type="NCBI Taxonomy" id="395019"/>
    <lineage>
        <taxon>Bacteria</taxon>
        <taxon>Pseudomonadati</taxon>
        <taxon>Pseudomonadota</taxon>
        <taxon>Betaproteobacteria</taxon>
        <taxon>Burkholderiales</taxon>
        <taxon>Burkholderiaceae</taxon>
        <taxon>Burkholderia</taxon>
        <taxon>Burkholderia cepacia complex</taxon>
    </lineage>
</organism>
<dbReference type="EMBL" id="CP000868">
    <property type="protein sequence ID" value="ABX15006.1"/>
    <property type="molecule type" value="Genomic_DNA"/>
</dbReference>
<dbReference type="EMBL" id="AP009385">
    <property type="protein sequence ID" value="BAG43845.1"/>
    <property type="molecule type" value="Genomic_DNA"/>
</dbReference>
<dbReference type="RefSeq" id="WP_006402712.1">
    <property type="nucleotide sequence ID" value="NC_010804.1"/>
</dbReference>
<dbReference type="STRING" id="395019.BMULJ_01928"/>
<dbReference type="GeneID" id="89570405"/>
<dbReference type="KEGG" id="bmj:BMULJ_01928"/>
<dbReference type="KEGG" id="bmu:Bmul_1318"/>
<dbReference type="eggNOG" id="COG1970">
    <property type="taxonomic scope" value="Bacteria"/>
</dbReference>
<dbReference type="HOGENOM" id="CLU_095787_0_1_4"/>
<dbReference type="Proteomes" id="UP000008815">
    <property type="component" value="Chromosome 1"/>
</dbReference>
<dbReference type="GO" id="GO:0005886">
    <property type="term" value="C:plasma membrane"/>
    <property type="evidence" value="ECO:0007669"/>
    <property type="project" value="UniProtKB-SubCell"/>
</dbReference>
<dbReference type="GO" id="GO:0008381">
    <property type="term" value="F:mechanosensitive monoatomic ion channel activity"/>
    <property type="evidence" value="ECO:0007669"/>
    <property type="project" value="UniProtKB-UniRule"/>
</dbReference>
<dbReference type="Gene3D" id="1.10.1200.120">
    <property type="entry name" value="Large-conductance mechanosensitive channel, MscL, domain 1"/>
    <property type="match status" value="1"/>
</dbReference>
<dbReference type="HAMAP" id="MF_00115">
    <property type="entry name" value="MscL"/>
    <property type="match status" value="1"/>
</dbReference>
<dbReference type="InterPro" id="IPR019823">
    <property type="entry name" value="Mechanosensitive_channel_CS"/>
</dbReference>
<dbReference type="InterPro" id="IPR001185">
    <property type="entry name" value="MS_channel"/>
</dbReference>
<dbReference type="InterPro" id="IPR037673">
    <property type="entry name" value="MSC/AndL"/>
</dbReference>
<dbReference type="InterPro" id="IPR036019">
    <property type="entry name" value="MscL_channel"/>
</dbReference>
<dbReference type="NCBIfam" id="TIGR00220">
    <property type="entry name" value="mscL"/>
    <property type="match status" value="1"/>
</dbReference>
<dbReference type="NCBIfam" id="NF001843">
    <property type="entry name" value="PRK00567.1-4"/>
    <property type="match status" value="1"/>
</dbReference>
<dbReference type="NCBIfam" id="NF010557">
    <property type="entry name" value="PRK13952.1"/>
    <property type="match status" value="1"/>
</dbReference>
<dbReference type="PANTHER" id="PTHR30266:SF2">
    <property type="entry name" value="LARGE-CONDUCTANCE MECHANOSENSITIVE CHANNEL"/>
    <property type="match status" value="1"/>
</dbReference>
<dbReference type="PANTHER" id="PTHR30266">
    <property type="entry name" value="MECHANOSENSITIVE CHANNEL MSCL"/>
    <property type="match status" value="1"/>
</dbReference>
<dbReference type="Pfam" id="PF01741">
    <property type="entry name" value="MscL"/>
    <property type="match status" value="1"/>
</dbReference>
<dbReference type="PRINTS" id="PR01264">
    <property type="entry name" value="MECHCHANNEL"/>
</dbReference>
<dbReference type="SUPFAM" id="SSF81330">
    <property type="entry name" value="Gated mechanosensitive channel"/>
    <property type="match status" value="1"/>
</dbReference>
<dbReference type="PROSITE" id="PS01327">
    <property type="entry name" value="MSCL"/>
    <property type="match status" value="1"/>
</dbReference>
<accession>A9AIS5</accession>